<keyword id="KW-1185">Reference proteome</keyword>
<keyword id="KW-0687">Ribonucleoprotein</keyword>
<keyword id="KW-0689">Ribosomal protein</keyword>
<keyword id="KW-0694">RNA-binding</keyword>
<keyword id="KW-0699">rRNA-binding</keyword>
<evidence type="ECO:0000255" key="1">
    <source>
        <dbReference type="HAMAP-Rule" id="MF_00362"/>
    </source>
</evidence>
<evidence type="ECO:0000305" key="2"/>
<protein>
    <recommendedName>
        <fullName evidence="1">Large ribosomal subunit protein uL10</fullName>
    </recommendedName>
    <alternativeName>
        <fullName evidence="2">50S ribosomal protein L10</fullName>
    </alternativeName>
</protein>
<feature type="chain" id="PRO_1000121004" description="Large ribosomal subunit protein uL10">
    <location>
        <begin position="1"/>
        <end position="172"/>
    </location>
</feature>
<gene>
    <name evidence="1" type="primary">rplJ</name>
    <name type="ordered locus">RC1_0699</name>
</gene>
<accession>B6IRP4</accession>
<dbReference type="EMBL" id="CP000613">
    <property type="protein sequence ID" value="ACI98130.1"/>
    <property type="molecule type" value="Genomic_DNA"/>
</dbReference>
<dbReference type="RefSeq" id="WP_012565922.1">
    <property type="nucleotide sequence ID" value="NC_011420.2"/>
</dbReference>
<dbReference type="SMR" id="B6IRP4"/>
<dbReference type="STRING" id="414684.RC1_0699"/>
<dbReference type="KEGG" id="rce:RC1_0699"/>
<dbReference type="eggNOG" id="COG0244">
    <property type="taxonomic scope" value="Bacteria"/>
</dbReference>
<dbReference type="HOGENOM" id="CLU_092227_0_0_5"/>
<dbReference type="OrthoDB" id="9791972at2"/>
<dbReference type="Proteomes" id="UP000001591">
    <property type="component" value="Chromosome"/>
</dbReference>
<dbReference type="GO" id="GO:1990904">
    <property type="term" value="C:ribonucleoprotein complex"/>
    <property type="evidence" value="ECO:0007669"/>
    <property type="project" value="UniProtKB-KW"/>
</dbReference>
<dbReference type="GO" id="GO:0005840">
    <property type="term" value="C:ribosome"/>
    <property type="evidence" value="ECO:0007669"/>
    <property type="project" value="UniProtKB-KW"/>
</dbReference>
<dbReference type="GO" id="GO:0070180">
    <property type="term" value="F:large ribosomal subunit rRNA binding"/>
    <property type="evidence" value="ECO:0007669"/>
    <property type="project" value="UniProtKB-UniRule"/>
</dbReference>
<dbReference type="GO" id="GO:0006412">
    <property type="term" value="P:translation"/>
    <property type="evidence" value="ECO:0007669"/>
    <property type="project" value="UniProtKB-UniRule"/>
</dbReference>
<dbReference type="CDD" id="cd05797">
    <property type="entry name" value="Ribosomal_L10"/>
    <property type="match status" value="1"/>
</dbReference>
<dbReference type="Gene3D" id="3.30.70.1730">
    <property type="match status" value="1"/>
</dbReference>
<dbReference type="Gene3D" id="6.10.250.290">
    <property type="match status" value="1"/>
</dbReference>
<dbReference type="HAMAP" id="MF_00362">
    <property type="entry name" value="Ribosomal_uL10"/>
    <property type="match status" value="1"/>
</dbReference>
<dbReference type="InterPro" id="IPR001790">
    <property type="entry name" value="Ribosomal_uL10"/>
</dbReference>
<dbReference type="InterPro" id="IPR043141">
    <property type="entry name" value="Ribosomal_uL10-like_sf"/>
</dbReference>
<dbReference type="InterPro" id="IPR022973">
    <property type="entry name" value="Ribosomal_uL10_bac"/>
</dbReference>
<dbReference type="InterPro" id="IPR047865">
    <property type="entry name" value="Ribosomal_uL10_bac_type"/>
</dbReference>
<dbReference type="NCBIfam" id="NF000955">
    <property type="entry name" value="PRK00099.1-1"/>
    <property type="match status" value="1"/>
</dbReference>
<dbReference type="PANTHER" id="PTHR11560">
    <property type="entry name" value="39S RIBOSOMAL PROTEIN L10, MITOCHONDRIAL"/>
    <property type="match status" value="1"/>
</dbReference>
<dbReference type="Pfam" id="PF00466">
    <property type="entry name" value="Ribosomal_L10"/>
    <property type="match status" value="1"/>
</dbReference>
<dbReference type="SUPFAM" id="SSF160369">
    <property type="entry name" value="Ribosomal protein L10-like"/>
    <property type="match status" value="1"/>
</dbReference>
<comment type="function">
    <text evidence="1">Forms part of the ribosomal stalk, playing a central role in the interaction of the ribosome with GTP-bound translation factors.</text>
</comment>
<comment type="subunit">
    <text evidence="1">Part of the ribosomal stalk of the 50S ribosomal subunit. The N-terminus interacts with L11 and the large rRNA to form the base of the stalk. The C-terminus forms an elongated spine to which L12 dimers bind in a sequential fashion forming a multimeric L10(L12)X complex.</text>
</comment>
<comment type="similarity">
    <text evidence="1">Belongs to the universal ribosomal protein uL10 family.</text>
</comment>
<name>RL10_RHOCS</name>
<organism>
    <name type="scientific">Rhodospirillum centenum (strain ATCC 51521 / SW)</name>
    <dbReference type="NCBI Taxonomy" id="414684"/>
    <lineage>
        <taxon>Bacteria</taxon>
        <taxon>Pseudomonadati</taxon>
        <taxon>Pseudomonadota</taxon>
        <taxon>Alphaproteobacteria</taxon>
        <taxon>Rhodospirillales</taxon>
        <taxon>Rhodospirillaceae</taxon>
        <taxon>Rhodospirillum</taxon>
    </lineage>
</organism>
<reference key="1">
    <citation type="submission" date="2007-03" db="EMBL/GenBank/DDBJ databases">
        <title>Genome sequence of Rhodospirillum centenum.</title>
        <authorList>
            <person name="Touchman J.W."/>
            <person name="Bauer C."/>
            <person name="Blankenship R.E."/>
        </authorList>
    </citation>
    <scope>NUCLEOTIDE SEQUENCE [LARGE SCALE GENOMIC DNA]</scope>
    <source>
        <strain>ATCC 51521 / SW</strain>
    </source>
</reference>
<sequence>MDRTQKEATVAALNSSLQEAGLIIVTKQSGMTVAEVTDLRRKMRAAGCSFKVTKNRLARIALKGTQFETLDGFFKGPTAIAYSKDPVAAAKVAVDYAKTNDKFQIVGGGLPGLKLDSQGVDALSKLPSLNELRASLLGMIQTPATRIAGVLQAPGGQVARVLAAYAKKDEAA</sequence>
<proteinExistence type="inferred from homology"/>